<gene>
    <name type="primary">hupN</name>
</gene>
<dbReference type="EMBL" id="L25315">
    <property type="protein sequence ID" value="AAA64449.1"/>
    <property type="molecule type" value="Genomic_DNA"/>
</dbReference>
<dbReference type="PIR" id="S53658">
    <property type="entry name" value="S53658"/>
</dbReference>
<dbReference type="SMR" id="Q43955"/>
<dbReference type="GO" id="GO:1902670">
    <property type="term" value="F:carbon dioxide binding"/>
    <property type="evidence" value="ECO:0007669"/>
    <property type="project" value="TreeGrafter"/>
</dbReference>
<dbReference type="GO" id="GO:0005506">
    <property type="term" value="F:iron ion binding"/>
    <property type="evidence" value="ECO:0007669"/>
    <property type="project" value="TreeGrafter"/>
</dbReference>
<dbReference type="GO" id="GO:0051604">
    <property type="term" value="P:protein maturation"/>
    <property type="evidence" value="ECO:0007669"/>
    <property type="project" value="TreeGrafter"/>
</dbReference>
<dbReference type="Gene3D" id="2.30.30.140">
    <property type="match status" value="1"/>
</dbReference>
<dbReference type="InterPro" id="IPR019812">
    <property type="entry name" value="Hydgase_assmbl_chp_CS"/>
</dbReference>
<dbReference type="InterPro" id="IPR001109">
    <property type="entry name" value="Hydrogenase_HupF/HypC"/>
</dbReference>
<dbReference type="NCBIfam" id="TIGR00074">
    <property type="entry name" value="hypC_hupF"/>
    <property type="match status" value="1"/>
</dbReference>
<dbReference type="PANTHER" id="PTHR35177">
    <property type="entry name" value="HYDROGENASE MATURATION FACTOR HYBG"/>
    <property type="match status" value="1"/>
</dbReference>
<dbReference type="PANTHER" id="PTHR35177:SF1">
    <property type="entry name" value="HYDROGENASE MATURATION FACTOR HYPC"/>
    <property type="match status" value="1"/>
</dbReference>
<dbReference type="Pfam" id="PF01455">
    <property type="entry name" value="HupF_HypC"/>
    <property type="match status" value="1"/>
</dbReference>
<dbReference type="PRINTS" id="PR00445">
    <property type="entry name" value="HUPFHYPC"/>
</dbReference>
<dbReference type="SUPFAM" id="SSF159127">
    <property type="entry name" value="HupF/HypC-like"/>
    <property type="match status" value="1"/>
</dbReference>
<dbReference type="PROSITE" id="PS01097">
    <property type="entry name" value="HUPF_HYPC"/>
    <property type="match status" value="1"/>
</dbReference>
<proteinExistence type="inferred from homology"/>
<evidence type="ECO:0000256" key="1">
    <source>
        <dbReference type="SAM" id="MobiDB-lite"/>
    </source>
</evidence>
<evidence type="ECO:0000305" key="2"/>
<feature type="chain" id="PRO_0000201388" description="Hydrogenase expression/formation protein HupN">
    <location>
        <begin position="1"/>
        <end position="108"/>
    </location>
</feature>
<feature type="region of interest" description="Disordered" evidence="1">
    <location>
        <begin position="88"/>
        <end position="108"/>
    </location>
</feature>
<name>HUPN_AZOCH</name>
<comment type="similarity">
    <text evidence="2">Belongs to the HupF/HypC family.</text>
</comment>
<reference key="1">
    <citation type="journal article" date="1994" name="J. Mol. Biol.">
        <title>Sequences, organization and analysis of the hupZMNOQRTV genes from the Azotobacter chroococcum hydrogenase gene cluster.</title>
        <authorList>
            <person name="Du L."/>
            <person name="Tibelius K.H."/>
            <person name="Souza E.M."/>
            <person name="Garg R.P."/>
            <person name="Yates M.G."/>
        </authorList>
    </citation>
    <scope>NUCLEOTIDE SEQUENCE [GENOMIC DNA]</scope>
</reference>
<accession>Q43955</accession>
<protein>
    <recommendedName>
        <fullName>Hydrogenase expression/formation protein HupN</fullName>
    </recommendedName>
</protein>
<sequence length="108" mass="11628">MCIGIPLQVLECAPGRALCGDDREARWIDTRLIEPPAPGDWLLVFLGAAREALDAERAAQIRDALCALQAVQAGDLAALDGLFADLDREPQLPPHLQAQLPPKEPNSP</sequence>
<organism>
    <name type="scientific">Azotobacter chroococcum mcd 1</name>
    <dbReference type="NCBI Taxonomy" id="355"/>
    <lineage>
        <taxon>Bacteria</taxon>
        <taxon>Pseudomonadati</taxon>
        <taxon>Pseudomonadota</taxon>
        <taxon>Gammaproteobacteria</taxon>
        <taxon>Pseudomonadales</taxon>
        <taxon>Pseudomonadaceae</taxon>
        <taxon>Azotobacter</taxon>
    </lineage>
</organism>